<accession>C5DEP0</accession>
<comment type="subcellular location">
    <subcellularLocation>
        <location evidence="1">Mitochondrion membrane</location>
        <topology evidence="1">Single-pass membrane protein</topology>
    </subcellularLocation>
</comment>
<comment type="similarity">
    <text evidence="4">Belongs to the AIM34 family.</text>
</comment>
<organism>
    <name type="scientific">Lachancea thermotolerans (strain ATCC 56472 / CBS 6340 / NRRL Y-8284)</name>
    <name type="common">Yeast</name>
    <name type="synonym">Kluyveromyces thermotolerans</name>
    <dbReference type="NCBI Taxonomy" id="559295"/>
    <lineage>
        <taxon>Eukaryota</taxon>
        <taxon>Fungi</taxon>
        <taxon>Dikarya</taxon>
        <taxon>Ascomycota</taxon>
        <taxon>Saccharomycotina</taxon>
        <taxon>Saccharomycetes</taxon>
        <taxon>Saccharomycetales</taxon>
        <taxon>Saccharomycetaceae</taxon>
        <taxon>Lachancea</taxon>
    </lineage>
</organism>
<evidence type="ECO:0000250" key="1"/>
<evidence type="ECO:0000255" key="2"/>
<evidence type="ECO:0000255" key="3">
    <source>
        <dbReference type="PROSITE-ProRule" id="PRU00186"/>
    </source>
</evidence>
<evidence type="ECO:0000305" key="4"/>
<keyword id="KW-0472">Membrane</keyword>
<keyword id="KW-0496">Mitochondrion</keyword>
<keyword id="KW-1185">Reference proteome</keyword>
<keyword id="KW-0809">Transit peptide</keyword>
<keyword id="KW-0812">Transmembrane</keyword>
<keyword id="KW-1133">Transmembrane helix</keyword>
<dbReference type="EMBL" id="CU928167">
    <property type="protein sequence ID" value="CAR22251.1"/>
    <property type="molecule type" value="Genomic_DNA"/>
</dbReference>
<dbReference type="RefSeq" id="XP_002552689.1">
    <property type="nucleotide sequence ID" value="XM_002552643.1"/>
</dbReference>
<dbReference type="SMR" id="C5DEP0"/>
<dbReference type="STRING" id="559295.C5DEP0"/>
<dbReference type="GeneID" id="8291571"/>
<dbReference type="KEGG" id="lth:KLTH0C10824g"/>
<dbReference type="eggNOG" id="ENOG502S5IP">
    <property type="taxonomic scope" value="Eukaryota"/>
</dbReference>
<dbReference type="HOGENOM" id="CLU_1098634_0_0_1"/>
<dbReference type="InParanoid" id="C5DEP0"/>
<dbReference type="OMA" id="KNECRTR"/>
<dbReference type="OrthoDB" id="3993201at2759"/>
<dbReference type="Proteomes" id="UP000002036">
    <property type="component" value="Chromosome C"/>
</dbReference>
<dbReference type="GO" id="GO:0031966">
    <property type="term" value="C:mitochondrial membrane"/>
    <property type="evidence" value="ECO:0007669"/>
    <property type="project" value="UniProtKB-SubCell"/>
</dbReference>
<dbReference type="Gene3D" id="1.10.720.30">
    <property type="entry name" value="SAP domain"/>
    <property type="match status" value="1"/>
</dbReference>
<dbReference type="InterPro" id="IPR003034">
    <property type="entry name" value="SAP_dom"/>
</dbReference>
<dbReference type="InterPro" id="IPR036361">
    <property type="entry name" value="SAP_dom_sf"/>
</dbReference>
<dbReference type="Pfam" id="PF02037">
    <property type="entry name" value="SAP"/>
    <property type="match status" value="1"/>
</dbReference>
<dbReference type="SMART" id="SM00513">
    <property type="entry name" value="SAP"/>
    <property type="match status" value="1"/>
</dbReference>
<dbReference type="SUPFAM" id="SSF68906">
    <property type="entry name" value="SAP domain"/>
    <property type="match status" value="1"/>
</dbReference>
<dbReference type="PROSITE" id="PS50800">
    <property type="entry name" value="SAP"/>
    <property type="match status" value="1"/>
</dbReference>
<gene>
    <name type="primary">AIM34</name>
    <name type="ordered locus">KLTH0C10824g</name>
</gene>
<proteinExistence type="inferred from homology"/>
<sequence>MNKQFYSQQWKGVLTGFRPLTMVSPRFSMFLVPRRISCRFVHSTPKKDHTTLLSNDKLATFNVMSLKALKNECRTRGLKISGRKGELVDRILAFETSGSLSGGAAKQAARQLHISKSIRARNDIKPVDDVRMPDIAATEKSLETPEQEYIVHITPLSSSADKKPVTRLEKELSVEEVSANVPPAVSTTDHDKVIFQVDAPTDNIEVVDEEAELDADKRASENFGLHATKEELNSRDKTFLFGFAAALVGWWSLKFWDNKGKKRSLT</sequence>
<name>AIM34_LACTC</name>
<feature type="transit peptide" description="Mitochondrion" evidence="2">
    <location>
        <begin position="1"/>
        <end position="40"/>
    </location>
</feature>
<feature type="chain" id="PRO_0000399710" description="Altered inheritance of mitochondria protein 34, mitochondrial">
    <location>
        <begin position="41"/>
        <end position="266"/>
    </location>
</feature>
<feature type="transmembrane region" description="Helical" evidence="2">
    <location>
        <begin position="238"/>
        <end position="256"/>
    </location>
</feature>
<feature type="domain" description="SAP" evidence="3">
    <location>
        <begin position="61"/>
        <end position="95"/>
    </location>
</feature>
<protein>
    <recommendedName>
        <fullName>Altered inheritance of mitochondria protein 34, mitochondrial</fullName>
    </recommendedName>
</protein>
<reference key="1">
    <citation type="journal article" date="2009" name="Genome Res.">
        <title>Comparative genomics of protoploid Saccharomycetaceae.</title>
        <authorList>
            <consortium name="The Genolevures Consortium"/>
            <person name="Souciet J.-L."/>
            <person name="Dujon B."/>
            <person name="Gaillardin C."/>
            <person name="Johnston M."/>
            <person name="Baret P.V."/>
            <person name="Cliften P."/>
            <person name="Sherman D.J."/>
            <person name="Weissenbach J."/>
            <person name="Westhof E."/>
            <person name="Wincker P."/>
            <person name="Jubin C."/>
            <person name="Poulain J."/>
            <person name="Barbe V."/>
            <person name="Segurens B."/>
            <person name="Artiguenave F."/>
            <person name="Anthouard V."/>
            <person name="Vacherie B."/>
            <person name="Val M.-E."/>
            <person name="Fulton R.S."/>
            <person name="Minx P."/>
            <person name="Wilson R."/>
            <person name="Durrens P."/>
            <person name="Jean G."/>
            <person name="Marck C."/>
            <person name="Martin T."/>
            <person name="Nikolski M."/>
            <person name="Rolland T."/>
            <person name="Seret M.-L."/>
            <person name="Casaregola S."/>
            <person name="Despons L."/>
            <person name="Fairhead C."/>
            <person name="Fischer G."/>
            <person name="Lafontaine I."/>
            <person name="Leh V."/>
            <person name="Lemaire M."/>
            <person name="de Montigny J."/>
            <person name="Neuveglise C."/>
            <person name="Thierry A."/>
            <person name="Blanc-Lenfle I."/>
            <person name="Bleykasten C."/>
            <person name="Diffels J."/>
            <person name="Fritsch E."/>
            <person name="Frangeul L."/>
            <person name="Goeffon A."/>
            <person name="Jauniaux N."/>
            <person name="Kachouri-Lafond R."/>
            <person name="Payen C."/>
            <person name="Potier S."/>
            <person name="Pribylova L."/>
            <person name="Ozanne C."/>
            <person name="Richard G.-F."/>
            <person name="Sacerdot C."/>
            <person name="Straub M.-L."/>
            <person name="Talla E."/>
        </authorList>
    </citation>
    <scope>NUCLEOTIDE SEQUENCE [LARGE SCALE GENOMIC DNA]</scope>
    <source>
        <strain>ATCC 56472 / CBS 6340 / NRRL Y-8284</strain>
    </source>
</reference>